<keyword id="KW-0012">Acyltransferase</keyword>
<keyword id="KW-0133">Cell shape</keyword>
<keyword id="KW-0961">Cell wall biogenesis/degradation</keyword>
<keyword id="KW-0963">Cytoplasm</keyword>
<keyword id="KW-0460">Magnesium</keyword>
<keyword id="KW-0479">Metal-binding</keyword>
<keyword id="KW-0511">Multifunctional enzyme</keyword>
<keyword id="KW-0548">Nucleotidyltransferase</keyword>
<keyword id="KW-0573">Peptidoglycan synthesis</keyword>
<keyword id="KW-1185">Reference proteome</keyword>
<keyword id="KW-0677">Repeat</keyword>
<keyword id="KW-0808">Transferase</keyword>
<name>GLMU_LACDA</name>
<sequence length="461" mass="50028">MEKYVVVLAAGKGTRMKSKLYKVLHQVCGKAMVEHVVDAARAVKPSKIVTIVGHGAEDVEKVLAGKSEFVMQEEQLGTGHAVMQAEGQLAALEGATLVVTGDTPLFTSETFEKLFAYHEEEGNAATVLTAEAPDPFGYGRIIRDDQGNVLRIVEQKDGKPEELKVKEINTGVFCFDNQDLWAALKQVGNDNSQGEYYLTDVLEILRKAGKKVGAYKMPDFSESLGVNDRIALAEATRIMQRRINEGHMRDGVTFIDPATAYIDADVEIGNDTVIEGGVTIKVHTVIGSDCLITSGSRIVDSQIGNGVTVTSSTIEESIMEDNTDIGPNSHLRPKSLIKRGAHLGNFVEVKKAEIGENTKVGHLTYVGDATLGKDINVGCGVIFSNFDGVKKFHTTVGDKSFIGAGSTLVSPINVADHAFIAADSTITKDVGKYEMAIARGRQVNKKDYWHKLPLSEDEEWK</sequence>
<gene>
    <name evidence="1" type="primary">glmU</name>
    <name type="ordered locus">Ldb0348</name>
</gene>
<dbReference type="EC" id="2.7.7.23" evidence="1"/>
<dbReference type="EC" id="2.3.1.157" evidence="1"/>
<dbReference type="EMBL" id="CR954253">
    <property type="protein sequence ID" value="CAI97186.1"/>
    <property type="molecule type" value="Genomic_DNA"/>
</dbReference>
<dbReference type="RefSeq" id="WP_011543623.1">
    <property type="nucleotide sequence ID" value="NC_008054.1"/>
</dbReference>
<dbReference type="SMR" id="Q1GBQ8"/>
<dbReference type="STRING" id="390333.Ldb0348"/>
<dbReference type="KEGG" id="ldb:Ldb0348"/>
<dbReference type="PATRIC" id="fig|390333.13.peg.440"/>
<dbReference type="eggNOG" id="COG1207">
    <property type="taxonomic scope" value="Bacteria"/>
</dbReference>
<dbReference type="HOGENOM" id="CLU_029499_15_2_9"/>
<dbReference type="BioCyc" id="LDEL390333:LDB_RS01455-MONOMER"/>
<dbReference type="UniPathway" id="UPA00113">
    <property type="reaction ID" value="UER00532"/>
</dbReference>
<dbReference type="UniPathway" id="UPA00113">
    <property type="reaction ID" value="UER00533"/>
</dbReference>
<dbReference type="UniPathway" id="UPA00973"/>
<dbReference type="Proteomes" id="UP000001259">
    <property type="component" value="Chromosome"/>
</dbReference>
<dbReference type="GO" id="GO:0005737">
    <property type="term" value="C:cytoplasm"/>
    <property type="evidence" value="ECO:0007669"/>
    <property type="project" value="UniProtKB-SubCell"/>
</dbReference>
<dbReference type="GO" id="GO:0016020">
    <property type="term" value="C:membrane"/>
    <property type="evidence" value="ECO:0007669"/>
    <property type="project" value="GOC"/>
</dbReference>
<dbReference type="GO" id="GO:0019134">
    <property type="term" value="F:glucosamine-1-phosphate N-acetyltransferase activity"/>
    <property type="evidence" value="ECO:0007669"/>
    <property type="project" value="UniProtKB-UniRule"/>
</dbReference>
<dbReference type="GO" id="GO:0000287">
    <property type="term" value="F:magnesium ion binding"/>
    <property type="evidence" value="ECO:0007669"/>
    <property type="project" value="UniProtKB-UniRule"/>
</dbReference>
<dbReference type="GO" id="GO:0003977">
    <property type="term" value="F:UDP-N-acetylglucosamine diphosphorylase activity"/>
    <property type="evidence" value="ECO:0007669"/>
    <property type="project" value="UniProtKB-UniRule"/>
</dbReference>
<dbReference type="GO" id="GO:0000902">
    <property type="term" value="P:cell morphogenesis"/>
    <property type="evidence" value="ECO:0007669"/>
    <property type="project" value="UniProtKB-UniRule"/>
</dbReference>
<dbReference type="GO" id="GO:0071555">
    <property type="term" value="P:cell wall organization"/>
    <property type="evidence" value="ECO:0007669"/>
    <property type="project" value="UniProtKB-KW"/>
</dbReference>
<dbReference type="GO" id="GO:0009245">
    <property type="term" value="P:lipid A biosynthetic process"/>
    <property type="evidence" value="ECO:0007669"/>
    <property type="project" value="UniProtKB-UniRule"/>
</dbReference>
<dbReference type="GO" id="GO:0009252">
    <property type="term" value="P:peptidoglycan biosynthetic process"/>
    <property type="evidence" value="ECO:0007669"/>
    <property type="project" value="UniProtKB-UniRule"/>
</dbReference>
<dbReference type="GO" id="GO:0008360">
    <property type="term" value="P:regulation of cell shape"/>
    <property type="evidence" value="ECO:0007669"/>
    <property type="project" value="UniProtKB-KW"/>
</dbReference>
<dbReference type="GO" id="GO:0006048">
    <property type="term" value="P:UDP-N-acetylglucosamine biosynthetic process"/>
    <property type="evidence" value="ECO:0007669"/>
    <property type="project" value="UniProtKB-UniPathway"/>
</dbReference>
<dbReference type="CDD" id="cd02540">
    <property type="entry name" value="GT2_GlmU_N_bac"/>
    <property type="match status" value="1"/>
</dbReference>
<dbReference type="CDD" id="cd03353">
    <property type="entry name" value="LbH_GlmU_C"/>
    <property type="match status" value="1"/>
</dbReference>
<dbReference type="Gene3D" id="2.160.10.10">
    <property type="entry name" value="Hexapeptide repeat proteins"/>
    <property type="match status" value="1"/>
</dbReference>
<dbReference type="Gene3D" id="3.90.550.10">
    <property type="entry name" value="Spore Coat Polysaccharide Biosynthesis Protein SpsA, Chain A"/>
    <property type="match status" value="1"/>
</dbReference>
<dbReference type="HAMAP" id="MF_01631">
    <property type="entry name" value="GlmU"/>
    <property type="match status" value="1"/>
</dbReference>
<dbReference type="InterPro" id="IPR005882">
    <property type="entry name" value="Bifunctional_GlmU"/>
</dbReference>
<dbReference type="InterPro" id="IPR050065">
    <property type="entry name" value="GlmU-like"/>
</dbReference>
<dbReference type="InterPro" id="IPR038009">
    <property type="entry name" value="GlmU_C_LbH"/>
</dbReference>
<dbReference type="InterPro" id="IPR018357">
    <property type="entry name" value="Hexapep_transf_CS"/>
</dbReference>
<dbReference type="InterPro" id="IPR025877">
    <property type="entry name" value="MobA-like_NTP_Trfase"/>
</dbReference>
<dbReference type="InterPro" id="IPR029044">
    <property type="entry name" value="Nucleotide-diphossugar_trans"/>
</dbReference>
<dbReference type="InterPro" id="IPR011004">
    <property type="entry name" value="Trimer_LpxA-like_sf"/>
</dbReference>
<dbReference type="NCBIfam" id="TIGR01173">
    <property type="entry name" value="glmU"/>
    <property type="match status" value="1"/>
</dbReference>
<dbReference type="NCBIfam" id="NF010934">
    <property type="entry name" value="PRK14354.1"/>
    <property type="match status" value="1"/>
</dbReference>
<dbReference type="PANTHER" id="PTHR43584:SF3">
    <property type="entry name" value="BIFUNCTIONAL PROTEIN GLMU"/>
    <property type="match status" value="1"/>
</dbReference>
<dbReference type="PANTHER" id="PTHR43584">
    <property type="entry name" value="NUCLEOTIDYL TRANSFERASE"/>
    <property type="match status" value="1"/>
</dbReference>
<dbReference type="Pfam" id="PF12804">
    <property type="entry name" value="NTP_transf_3"/>
    <property type="match status" value="1"/>
</dbReference>
<dbReference type="SUPFAM" id="SSF53448">
    <property type="entry name" value="Nucleotide-diphospho-sugar transferases"/>
    <property type="match status" value="1"/>
</dbReference>
<dbReference type="SUPFAM" id="SSF51161">
    <property type="entry name" value="Trimeric LpxA-like enzymes"/>
    <property type="match status" value="1"/>
</dbReference>
<dbReference type="PROSITE" id="PS00101">
    <property type="entry name" value="HEXAPEP_TRANSFERASES"/>
    <property type="match status" value="1"/>
</dbReference>
<comment type="function">
    <text evidence="1">Catalyzes the last two sequential reactions in the de novo biosynthetic pathway for UDP-N-acetylglucosamine (UDP-GlcNAc). The C-terminal domain catalyzes the transfer of acetyl group from acetyl coenzyme A to glucosamine-1-phosphate (GlcN-1-P) to produce N-acetylglucosamine-1-phosphate (GlcNAc-1-P), which is converted into UDP-GlcNAc by the transfer of uridine 5-monophosphate (from uridine 5-triphosphate), a reaction catalyzed by the N-terminal domain.</text>
</comment>
<comment type="catalytic activity">
    <reaction evidence="1">
        <text>alpha-D-glucosamine 1-phosphate + acetyl-CoA = N-acetyl-alpha-D-glucosamine 1-phosphate + CoA + H(+)</text>
        <dbReference type="Rhea" id="RHEA:13725"/>
        <dbReference type="ChEBI" id="CHEBI:15378"/>
        <dbReference type="ChEBI" id="CHEBI:57287"/>
        <dbReference type="ChEBI" id="CHEBI:57288"/>
        <dbReference type="ChEBI" id="CHEBI:57776"/>
        <dbReference type="ChEBI" id="CHEBI:58516"/>
        <dbReference type="EC" id="2.3.1.157"/>
    </reaction>
</comment>
<comment type="catalytic activity">
    <reaction evidence="1">
        <text>N-acetyl-alpha-D-glucosamine 1-phosphate + UTP + H(+) = UDP-N-acetyl-alpha-D-glucosamine + diphosphate</text>
        <dbReference type="Rhea" id="RHEA:13509"/>
        <dbReference type="ChEBI" id="CHEBI:15378"/>
        <dbReference type="ChEBI" id="CHEBI:33019"/>
        <dbReference type="ChEBI" id="CHEBI:46398"/>
        <dbReference type="ChEBI" id="CHEBI:57705"/>
        <dbReference type="ChEBI" id="CHEBI:57776"/>
        <dbReference type="EC" id="2.7.7.23"/>
    </reaction>
</comment>
<comment type="cofactor">
    <cofactor evidence="1">
        <name>Mg(2+)</name>
        <dbReference type="ChEBI" id="CHEBI:18420"/>
    </cofactor>
    <text evidence="1">Binds 1 Mg(2+) ion per subunit.</text>
</comment>
<comment type="pathway">
    <text evidence="1">Nucleotide-sugar biosynthesis; UDP-N-acetyl-alpha-D-glucosamine biosynthesis; N-acetyl-alpha-D-glucosamine 1-phosphate from alpha-D-glucosamine 6-phosphate (route II): step 2/2.</text>
</comment>
<comment type="pathway">
    <text evidence="1">Nucleotide-sugar biosynthesis; UDP-N-acetyl-alpha-D-glucosamine biosynthesis; UDP-N-acetyl-alpha-D-glucosamine from N-acetyl-alpha-D-glucosamine 1-phosphate: step 1/1.</text>
</comment>
<comment type="pathway">
    <text evidence="1">Bacterial outer membrane biogenesis; LPS lipid A biosynthesis.</text>
</comment>
<comment type="subunit">
    <text evidence="1">Homotrimer.</text>
</comment>
<comment type="subcellular location">
    <subcellularLocation>
        <location evidence="1">Cytoplasm</location>
    </subcellularLocation>
</comment>
<comment type="similarity">
    <text evidence="1">In the N-terminal section; belongs to the N-acetylglucosamine-1-phosphate uridyltransferase family.</text>
</comment>
<comment type="similarity">
    <text evidence="1">In the C-terminal section; belongs to the transferase hexapeptide repeat family.</text>
</comment>
<organism>
    <name type="scientific">Lactobacillus delbrueckii subsp. bulgaricus (strain ATCC 11842 / DSM 20081 / BCRC 10696 / JCM 1002 / NBRC 13953 / NCIMB 11778 / NCTC 12712 / WDCM 00102 / Lb 14)</name>
    <dbReference type="NCBI Taxonomy" id="390333"/>
    <lineage>
        <taxon>Bacteria</taxon>
        <taxon>Bacillati</taxon>
        <taxon>Bacillota</taxon>
        <taxon>Bacilli</taxon>
        <taxon>Lactobacillales</taxon>
        <taxon>Lactobacillaceae</taxon>
        <taxon>Lactobacillus</taxon>
    </lineage>
</organism>
<evidence type="ECO:0000255" key="1">
    <source>
        <dbReference type="HAMAP-Rule" id="MF_01631"/>
    </source>
</evidence>
<accession>Q1GBQ8</accession>
<reference key="1">
    <citation type="journal article" date="2006" name="Proc. Natl. Acad. Sci. U.S.A.">
        <title>The complete genome sequence of Lactobacillus bulgaricus reveals extensive and ongoing reductive evolution.</title>
        <authorList>
            <person name="van de Guchte M."/>
            <person name="Penaud S."/>
            <person name="Grimaldi C."/>
            <person name="Barbe V."/>
            <person name="Bryson K."/>
            <person name="Nicolas P."/>
            <person name="Robert C."/>
            <person name="Oztas S."/>
            <person name="Mangenot S."/>
            <person name="Couloux A."/>
            <person name="Loux V."/>
            <person name="Dervyn R."/>
            <person name="Bossy R."/>
            <person name="Bolotin A."/>
            <person name="Batto J.-M."/>
            <person name="Walunas T."/>
            <person name="Gibrat J.-F."/>
            <person name="Bessieres P."/>
            <person name="Weissenbach J."/>
            <person name="Ehrlich S.D."/>
            <person name="Maguin E."/>
        </authorList>
    </citation>
    <scope>NUCLEOTIDE SEQUENCE [LARGE SCALE GENOMIC DNA]</scope>
    <source>
        <strain>ATCC 11842 / DSM 20081 / BCRC 10696 / JCM 1002 / NBRC 13953 / NCIMB 11778 / NCTC 12712 / WDCM 00102 / Lb 14</strain>
    </source>
</reference>
<feature type="chain" id="PRO_0000263136" description="Bifunctional protein GlmU">
    <location>
        <begin position="1"/>
        <end position="461"/>
    </location>
</feature>
<feature type="region of interest" description="Pyrophosphorylase" evidence="1">
    <location>
        <begin position="1"/>
        <end position="229"/>
    </location>
</feature>
<feature type="region of interest" description="Linker" evidence="1">
    <location>
        <begin position="230"/>
        <end position="250"/>
    </location>
</feature>
<feature type="region of interest" description="N-acetyltransferase" evidence="1">
    <location>
        <begin position="251"/>
        <end position="461"/>
    </location>
</feature>
<feature type="active site" description="Proton acceptor" evidence="1">
    <location>
        <position position="362"/>
    </location>
</feature>
<feature type="binding site" evidence="1">
    <location>
        <begin position="8"/>
        <end position="11"/>
    </location>
    <ligand>
        <name>UDP-N-acetyl-alpha-D-glucosamine</name>
        <dbReference type="ChEBI" id="CHEBI:57705"/>
    </ligand>
</feature>
<feature type="binding site" evidence="1">
    <location>
        <position position="22"/>
    </location>
    <ligand>
        <name>UDP-N-acetyl-alpha-D-glucosamine</name>
        <dbReference type="ChEBI" id="CHEBI:57705"/>
    </ligand>
</feature>
<feature type="binding site" evidence="1">
    <location>
        <position position="72"/>
    </location>
    <ligand>
        <name>UDP-N-acetyl-alpha-D-glucosamine</name>
        <dbReference type="ChEBI" id="CHEBI:57705"/>
    </ligand>
</feature>
<feature type="binding site" evidence="1">
    <location>
        <begin position="77"/>
        <end position="78"/>
    </location>
    <ligand>
        <name>UDP-N-acetyl-alpha-D-glucosamine</name>
        <dbReference type="ChEBI" id="CHEBI:57705"/>
    </ligand>
</feature>
<feature type="binding site" evidence="1">
    <location>
        <position position="102"/>
    </location>
    <ligand>
        <name>Mg(2+)</name>
        <dbReference type="ChEBI" id="CHEBI:18420"/>
    </ligand>
</feature>
<feature type="binding site" evidence="1">
    <location>
        <position position="139"/>
    </location>
    <ligand>
        <name>UDP-N-acetyl-alpha-D-glucosamine</name>
        <dbReference type="ChEBI" id="CHEBI:57705"/>
    </ligand>
</feature>
<feature type="binding site" evidence="1">
    <location>
        <position position="154"/>
    </location>
    <ligand>
        <name>UDP-N-acetyl-alpha-D-glucosamine</name>
        <dbReference type="ChEBI" id="CHEBI:57705"/>
    </ligand>
</feature>
<feature type="binding site" evidence="1">
    <location>
        <position position="169"/>
    </location>
    <ligand>
        <name>UDP-N-acetyl-alpha-D-glucosamine</name>
        <dbReference type="ChEBI" id="CHEBI:57705"/>
    </ligand>
</feature>
<feature type="binding site" evidence="1">
    <location>
        <position position="227"/>
    </location>
    <ligand>
        <name>Mg(2+)</name>
        <dbReference type="ChEBI" id="CHEBI:18420"/>
    </ligand>
</feature>
<feature type="binding site" evidence="1">
    <location>
        <position position="227"/>
    </location>
    <ligand>
        <name>UDP-N-acetyl-alpha-D-glucosamine</name>
        <dbReference type="ChEBI" id="CHEBI:57705"/>
    </ligand>
</feature>
<feature type="binding site" evidence="1">
    <location>
        <position position="332"/>
    </location>
    <ligand>
        <name>UDP-N-acetyl-alpha-D-glucosamine</name>
        <dbReference type="ChEBI" id="CHEBI:57705"/>
    </ligand>
</feature>
<feature type="binding site" evidence="1">
    <location>
        <position position="350"/>
    </location>
    <ligand>
        <name>UDP-N-acetyl-alpha-D-glucosamine</name>
        <dbReference type="ChEBI" id="CHEBI:57705"/>
    </ligand>
</feature>
<feature type="binding site" evidence="1">
    <location>
        <position position="365"/>
    </location>
    <ligand>
        <name>UDP-N-acetyl-alpha-D-glucosamine</name>
        <dbReference type="ChEBI" id="CHEBI:57705"/>
    </ligand>
</feature>
<feature type="binding site" evidence="1">
    <location>
        <position position="376"/>
    </location>
    <ligand>
        <name>UDP-N-acetyl-alpha-D-glucosamine</name>
        <dbReference type="ChEBI" id="CHEBI:57705"/>
    </ligand>
</feature>
<feature type="binding site" evidence="1">
    <location>
        <position position="422"/>
    </location>
    <ligand>
        <name>acetyl-CoA</name>
        <dbReference type="ChEBI" id="CHEBI:57288"/>
    </ligand>
</feature>
<feature type="binding site" evidence="1">
    <location>
        <position position="439"/>
    </location>
    <ligand>
        <name>acetyl-CoA</name>
        <dbReference type="ChEBI" id="CHEBI:57288"/>
    </ligand>
</feature>
<protein>
    <recommendedName>
        <fullName evidence="1">Bifunctional protein GlmU</fullName>
    </recommendedName>
    <domain>
        <recommendedName>
            <fullName evidence="1">UDP-N-acetylglucosamine pyrophosphorylase</fullName>
            <ecNumber evidence="1">2.7.7.23</ecNumber>
        </recommendedName>
        <alternativeName>
            <fullName evidence="1">N-acetylglucosamine-1-phosphate uridyltransferase</fullName>
        </alternativeName>
    </domain>
    <domain>
        <recommendedName>
            <fullName evidence="1">Glucosamine-1-phosphate N-acetyltransferase</fullName>
            <ecNumber evidence="1">2.3.1.157</ecNumber>
        </recommendedName>
    </domain>
</protein>
<proteinExistence type="inferred from homology"/>